<evidence type="ECO:0000255" key="1">
    <source>
        <dbReference type="HAMAP-Rule" id="MF_00326"/>
    </source>
</evidence>
<evidence type="ECO:0000305" key="2"/>
<comment type="function">
    <text evidence="1">Multifunctional RNA-binding protein that recognizes the K-turn motif in ribosomal RNA, the RNA component of RNase P, box H/ACA, box C/D and box C'/D' sRNAs.</text>
</comment>
<comment type="subunit">
    <text evidence="1">Part of the 50S ribosomal subunit. Probably part of the RNase P complex.</text>
</comment>
<comment type="subcellular location">
    <subcellularLocation>
        <location evidence="1">Cytoplasm</location>
    </subcellularLocation>
</comment>
<comment type="similarity">
    <text evidence="1">Belongs to the eukaryotic ribosomal protein eL8 family.</text>
</comment>
<proteinExistence type="evidence at protein level"/>
<keyword id="KW-0002">3D-structure</keyword>
<keyword id="KW-0963">Cytoplasm</keyword>
<keyword id="KW-1185">Reference proteome</keyword>
<keyword id="KW-0687">Ribonucleoprotein</keyword>
<keyword id="KW-0689">Ribosomal protein</keyword>
<keyword id="KW-0694">RNA-binding</keyword>
<keyword id="KW-0699">rRNA-binding</keyword>
<keyword id="KW-0819">tRNA processing</keyword>
<gene>
    <name evidence="1" type="primary">rpl7ae</name>
    <name type="ordered locus">Saci_1520</name>
</gene>
<reference key="1">
    <citation type="journal article" date="2005" name="J. Bacteriol.">
        <title>The genome of Sulfolobus acidocaldarius, a model organism of the Crenarchaeota.</title>
        <authorList>
            <person name="Chen L."/>
            <person name="Bruegger K."/>
            <person name="Skovgaard M."/>
            <person name="Redder P."/>
            <person name="She Q."/>
            <person name="Torarinsson E."/>
            <person name="Greve B."/>
            <person name="Awayez M."/>
            <person name="Zibat A."/>
            <person name="Klenk H.-P."/>
            <person name="Garrett R.A."/>
        </authorList>
    </citation>
    <scope>NUCLEOTIDE SEQUENCE [LARGE SCALE GENOMIC DNA]</scope>
    <source>
        <strain>ATCC 33909 / DSM 639 / JCM 8929 / NBRC 15157 / NCIMB 11770</strain>
    </source>
</reference>
<protein>
    <recommendedName>
        <fullName evidence="1">Large ribosomal subunit protein eL8</fullName>
    </recommendedName>
    <alternativeName>
        <fullName evidence="2">50S ribosomal protein L7Ae</fullName>
    </alternativeName>
    <alternativeName>
        <fullName evidence="1">Ribosomal protein L8e</fullName>
    </alternativeName>
</protein>
<feature type="chain" id="PRO_0000136805" description="Large ribosomal subunit protein eL8">
    <location>
        <begin position="1"/>
        <end position="126"/>
    </location>
</feature>
<accession>Q4J8P1</accession>
<dbReference type="EMBL" id="CP000077">
    <property type="protein sequence ID" value="AAY80839.1"/>
    <property type="molecule type" value="Genomic_DNA"/>
</dbReference>
<dbReference type="RefSeq" id="WP_011278341.1">
    <property type="nucleotide sequence ID" value="NC_007181.1"/>
</dbReference>
<dbReference type="PDB" id="8HKU">
    <property type="method" value="EM"/>
    <property type="resolution" value="2.72 A"/>
    <property type="chains" value="L7A1/L7A2=4-126"/>
</dbReference>
<dbReference type="PDB" id="8HKV">
    <property type="method" value="EM"/>
    <property type="resolution" value="4.94 A"/>
    <property type="chains" value="L7A1/L7A2=4-126"/>
</dbReference>
<dbReference type="PDB" id="8HKX">
    <property type="method" value="EM"/>
    <property type="resolution" value="3.14 A"/>
    <property type="chains" value="SL7A=4-126"/>
</dbReference>
<dbReference type="PDB" id="8HKY">
    <property type="method" value="EM"/>
    <property type="resolution" value="4.45 A"/>
    <property type="chains" value="L7A1/L7A2/SL7A=4-126"/>
</dbReference>
<dbReference type="PDB" id="8HKZ">
    <property type="method" value="EM"/>
    <property type="resolution" value="4.78 A"/>
    <property type="chains" value="L7A1/L7A2/SL7A=4-126"/>
</dbReference>
<dbReference type="PDB" id="8HL1">
    <property type="method" value="EM"/>
    <property type="resolution" value="3.93 A"/>
    <property type="chains" value="L7A1/L7A2/SL7A=4-126"/>
</dbReference>
<dbReference type="PDB" id="8HL2">
    <property type="method" value="EM"/>
    <property type="resolution" value="4.10 A"/>
    <property type="chains" value="L7A1/L7A2/SL7A=4-126"/>
</dbReference>
<dbReference type="PDB" id="8HL3">
    <property type="method" value="EM"/>
    <property type="resolution" value="4.80 A"/>
    <property type="chains" value="L7A1/L7A2/SL7A=4-126"/>
</dbReference>
<dbReference type="PDB" id="8HL4">
    <property type="method" value="EM"/>
    <property type="resolution" value="4.62 A"/>
    <property type="chains" value="L7A1/L7A2/SL7A=4-126"/>
</dbReference>
<dbReference type="PDB" id="8HL5">
    <property type="method" value="EM"/>
    <property type="resolution" value="5.72 A"/>
    <property type="chains" value="L7A1/L7A2/SL7A=4-126"/>
</dbReference>
<dbReference type="PDB" id="8WKP">
    <property type="method" value="EM"/>
    <property type="resolution" value="4.62 A"/>
    <property type="chains" value="SL7A=4-126"/>
</dbReference>
<dbReference type="PDB" id="8WQ2">
    <property type="method" value="EM"/>
    <property type="resolution" value="4.10 A"/>
    <property type="chains" value="SL7A=4-126"/>
</dbReference>
<dbReference type="PDB" id="8WQ4">
    <property type="method" value="EM"/>
    <property type="resolution" value="4.53 A"/>
    <property type="chains" value="SL7A=4-126"/>
</dbReference>
<dbReference type="PDBsum" id="8HKU"/>
<dbReference type="PDBsum" id="8HKV"/>
<dbReference type="PDBsum" id="8HKX"/>
<dbReference type="PDBsum" id="8HKY"/>
<dbReference type="PDBsum" id="8HKZ"/>
<dbReference type="PDBsum" id="8HL1"/>
<dbReference type="PDBsum" id="8HL2"/>
<dbReference type="PDBsum" id="8HL3"/>
<dbReference type="PDBsum" id="8HL4"/>
<dbReference type="PDBsum" id="8HL5"/>
<dbReference type="PDBsum" id="8WKP"/>
<dbReference type="PDBsum" id="8WQ2"/>
<dbReference type="PDBsum" id="8WQ4"/>
<dbReference type="EMDB" id="EMD-34860"/>
<dbReference type="EMDB" id="EMD-34861"/>
<dbReference type="EMDB" id="EMD-34862"/>
<dbReference type="EMDB" id="EMD-34863"/>
<dbReference type="EMDB" id="EMD-34864"/>
<dbReference type="EMDB" id="EMD-34866"/>
<dbReference type="EMDB" id="EMD-34867"/>
<dbReference type="EMDB" id="EMD-34868"/>
<dbReference type="EMDB" id="EMD-34869"/>
<dbReference type="EMDB" id="EMD-34870"/>
<dbReference type="EMDB" id="EMD-37604"/>
<dbReference type="EMDB" id="EMD-37733"/>
<dbReference type="EMDB" id="EMD-37734"/>
<dbReference type="SMR" id="Q4J8P1"/>
<dbReference type="STRING" id="330779.Saci_1520"/>
<dbReference type="GeneID" id="14552018"/>
<dbReference type="KEGG" id="sai:Saci_1520"/>
<dbReference type="PATRIC" id="fig|330779.12.peg.1464"/>
<dbReference type="eggNOG" id="arCOG01751">
    <property type="taxonomic scope" value="Archaea"/>
</dbReference>
<dbReference type="HOGENOM" id="CLU_084513_4_0_2"/>
<dbReference type="Proteomes" id="UP000001018">
    <property type="component" value="Chromosome"/>
</dbReference>
<dbReference type="GO" id="GO:0005737">
    <property type="term" value="C:cytoplasm"/>
    <property type="evidence" value="ECO:0007669"/>
    <property type="project" value="UniProtKB-SubCell"/>
</dbReference>
<dbReference type="GO" id="GO:1990904">
    <property type="term" value="C:ribonucleoprotein complex"/>
    <property type="evidence" value="ECO:0007669"/>
    <property type="project" value="UniProtKB-KW"/>
</dbReference>
<dbReference type="GO" id="GO:0005840">
    <property type="term" value="C:ribosome"/>
    <property type="evidence" value="ECO:0007669"/>
    <property type="project" value="UniProtKB-KW"/>
</dbReference>
<dbReference type="GO" id="GO:0004526">
    <property type="term" value="F:ribonuclease P activity"/>
    <property type="evidence" value="ECO:0007669"/>
    <property type="project" value="UniProtKB-UniRule"/>
</dbReference>
<dbReference type="GO" id="GO:0019843">
    <property type="term" value="F:rRNA binding"/>
    <property type="evidence" value="ECO:0007669"/>
    <property type="project" value="UniProtKB-KW"/>
</dbReference>
<dbReference type="GO" id="GO:0003735">
    <property type="term" value="F:structural constituent of ribosome"/>
    <property type="evidence" value="ECO:0007669"/>
    <property type="project" value="InterPro"/>
</dbReference>
<dbReference type="GO" id="GO:0042254">
    <property type="term" value="P:ribosome biogenesis"/>
    <property type="evidence" value="ECO:0007669"/>
    <property type="project" value="InterPro"/>
</dbReference>
<dbReference type="GO" id="GO:0006412">
    <property type="term" value="P:translation"/>
    <property type="evidence" value="ECO:0007669"/>
    <property type="project" value="UniProtKB-UniRule"/>
</dbReference>
<dbReference type="GO" id="GO:0001682">
    <property type="term" value="P:tRNA 5'-leader removal"/>
    <property type="evidence" value="ECO:0007669"/>
    <property type="project" value="UniProtKB-UniRule"/>
</dbReference>
<dbReference type="FunFam" id="3.30.1330.30:FF:000020">
    <property type="entry name" value="50S ribosomal protein L7Ae"/>
    <property type="match status" value="1"/>
</dbReference>
<dbReference type="Gene3D" id="3.30.1330.30">
    <property type="match status" value="1"/>
</dbReference>
<dbReference type="HAMAP" id="MF_00326">
    <property type="entry name" value="Ribosomal_eL8"/>
    <property type="match status" value="1"/>
</dbReference>
<dbReference type="InterPro" id="IPR050257">
    <property type="entry name" value="eL8/uL1-like"/>
</dbReference>
<dbReference type="InterPro" id="IPR029064">
    <property type="entry name" value="Ribosomal_eL30-like_sf"/>
</dbReference>
<dbReference type="InterPro" id="IPR004037">
    <property type="entry name" value="Ribosomal_eL8-like_CS"/>
</dbReference>
<dbReference type="InterPro" id="IPR004038">
    <property type="entry name" value="Ribosomal_eL8/eL30/eS12/Gad45"/>
</dbReference>
<dbReference type="InterPro" id="IPR018492">
    <property type="entry name" value="Ribosomal_eL8/Nhp2"/>
</dbReference>
<dbReference type="InterPro" id="IPR022481">
    <property type="entry name" value="Ribosomal_eL8_arc"/>
</dbReference>
<dbReference type="NCBIfam" id="TIGR03677">
    <property type="entry name" value="eL8_ribo"/>
    <property type="match status" value="1"/>
</dbReference>
<dbReference type="PANTHER" id="PTHR23105">
    <property type="entry name" value="RIBOSOMAL PROTEIN L7AE FAMILY MEMBER"/>
    <property type="match status" value="1"/>
</dbReference>
<dbReference type="Pfam" id="PF01248">
    <property type="entry name" value="Ribosomal_L7Ae"/>
    <property type="match status" value="1"/>
</dbReference>
<dbReference type="PRINTS" id="PR00881">
    <property type="entry name" value="L7ARS6FAMILY"/>
</dbReference>
<dbReference type="PRINTS" id="PR00884">
    <property type="entry name" value="RIBOSOMALHS6"/>
</dbReference>
<dbReference type="SUPFAM" id="SSF55315">
    <property type="entry name" value="L30e-like"/>
    <property type="match status" value="1"/>
</dbReference>
<dbReference type="PROSITE" id="PS01082">
    <property type="entry name" value="RIBOSOMAL_L7AE"/>
    <property type="match status" value="1"/>
</dbReference>
<sequence length="126" mass="13677">MSKPSYVKFEVPQELADKVLEAVKKAKDSGKIKKGTNETTKAVERSQAKLVVIAEDVQPEEIVAHLPLLCEEKKIPYVYVPSKKSLGEACGLQVAAASVALMDPGEAKDLVDEIVKRVNEIKGKSS</sequence>
<organism>
    <name type="scientific">Sulfolobus acidocaldarius (strain ATCC 33909 / DSM 639 / JCM 8929 / NBRC 15157 / NCIMB 11770)</name>
    <dbReference type="NCBI Taxonomy" id="330779"/>
    <lineage>
        <taxon>Archaea</taxon>
        <taxon>Thermoproteota</taxon>
        <taxon>Thermoprotei</taxon>
        <taxon>Sulfolobales</taxon>
        <taxon>Sulfolobaceae</taxon>
        <taxon>Sulfolobus</taxon>
    </lineage>
</organism>
<name>RL7A_SULAC</name>